<reference key="1">
    <citation type="journal article" date="1997" name="Nat. Genet.">
        <title>The mitochondrial genome of Arabidopsis thaliana contains 57 genes in 366,924 nucleotides.</title>
        <authorList>
            <person name="Unseld M."/>
            <person name="Marienfeld J.R."/>
            <person name="Brandt P."/>
            <person name="Brennicke A."/>
        </authorList>
    </citation>
    <scope>NUCLEOTIDE SEQUENCE [LARGE SCALE GENOMIC DNA]</scope>
    <source>
        <strain>cv. C24</strain>
    </source>
</reference>
<reference key="2">
    <citation type="journal article" date="2018" name="Plant Cell">
        <title>Correction of persistent errors in Arabidopsis reference mitochondrial genomes.</title>
        <authorList>
            <person name="Sloan D.B."/>
            <person name="Wu Z."/>
            <person name="Sharbrough J."/>
        </authorList>
    </citation>
    <scope>NUCLEOTIDE SEQUENCE [LARGE SCALE GENOMIC DNA]</scope>
    <scope>RNA EDITING</scope>
    <source>
        <strain>cv. Columbia</strain>
    </source>
</reference>
<reference key="3">
    <citation type="journal article" date="1999" name="Nature">
        <title>Sequence and analysis of chromosome 2 of the plant Arabidopsis thaliana.</title>
        <authorList>
            <person name="Lin X."/>
            <person name="Kaul S."/>
            <person name="Rounsley S.D."/>
            <person name="Shea T.P."/>
            <person name="Benito M.-I."/>
            <person name="Town C.D."/>
            <person name="Fujii C.Y."/>
            <person name="Mason T.M."/>
            <person name="Bowman C.L."/>
            <person name="Barnstead M.E."/>
            <person name="Feldblyum T.V."/>
            <person name="Buell C.R."/>
            <person name="Ketchum K.A."/>
            <person name="Lee J.J."/>
            <person name="Ronning C.M."/>
            <person name="Koo H.L."/>
            <person name="Moffat K.S."/>
            <person name="Cronin L.A."/>
            <person name="Shen M."/>
            <person name="Pai G."/>
            <person name="Van Aken S."/>
            <person name="Umayam L."/>
            <person name="Tallon L.J."/>
            <person name="Gill J.E."/>
            <person name="Adams M.D."/>
            <person name="Carrera A.J."/>
            <person name="Creasy T.H."/>
            <person name="Goodman H.M."/>
            <person name="Somerville C.R."/>
            <person name="Copenhaver G.P."/>
            <person name="Preuss D."/>
            <person name="Nierman W.C."/>
            <person name="White O."/>
            <person name="Eisen J.A."/>
            <person name="Salzberg S.L."/>
            <person name="Fraser C.M."/>
            <person name="Venter J.C."/>
        </authorList>
    </citation>
    <scope>NUCLEOTIDE SEQUENCE [LARGE SCALE GENOMIC DNA] (AT2G07715)</scope>
    <source>
        <strain>cv. Columbia</strain>
    </source>
</reference>
<reference key="4">
    <citation type="submission" date="1994-11" db="EMBL/GenBank/DDBJ databases">
        <authorList>
            <person name="Schuster W."/>
        </authorList>
    </citation>
    <scope>NUCLEOTIDE SEQUENCE [GENOMIC DNA] OF 1-306</scope>
    <source>
        <strain>cv. C24</strain>
    </source>
</reference>
<reference key="5">
    <citation type="journal article" date="2023" name="Plant Cell">
        <title>An updated nomenclature for plant ribosomal protein genes.</title>
        <authorList>
            <person name="Scarpin M.R."/>
            <person name="Busche M."/>
            <person name="Martinez R.E."/>
            <person name="Harper L.C."/>
            <person name="Reiser L."/>
            <person name="Szakonyi D."/>
            <person name="Merchante C."/>
            <person name="Lan T."/>
            <person name="Xiong W."/>
            <person name="Mo B."/>
            <person name="Tang G."/>
            <person name="Chen X."/>
            <person name="Bailey-Serres J."/>
            <person name="Browning K.S."/>
            <person name="Brunkard J.O."/>
        </authorList>
    </citation>
    <scope>NOMENCLATURE</scope>
</reference>
<feature type="chain" id="PRO_0000129736" description="Large ribosomal subunit protein uL2mz, N-terminal part">
    <location>
        <begin position="1"/>
        <end position="349"/>
    </location>
</feature>
<feature type="sequence conflict" description="In Ref. 4; CAA57911." evidence="3" ref="4">
    <original>L</original>
    <variation>Q</variation>
    <location>
        <position position="41"/>
    </location>
</feature>
<feature type="sequence conflict" description="In Ref. 4; CAA57911." evidence="3" ref="4">
    <original>GC</original>
    <variation>AA</variation>
    <location>
        <begin position="78"/>
        <end position="79"/>
    </location>
</feature>
<feature type="sequence conflict" description="In Ref. 3; AAM15498." evidence="3" ref="3">
    <original>P</original>
    <variation>L</variation>
    <location>
        <position position="174"/>
    </location>
</feature>
<organism>
    <name type="scientific">Arabidopsis thaliana</name>
    <name type="common">Mouse-ear cress</name>
    <dbReference type="NCBI Taxonomy" id="3702"/>
    <lineage>
        <taxon>Eukaryota</taxon>
        <taxon>Viridiplantae</taxon>
        <taxon>Streptophyta</taxon>
        <taxon>Embryophyta</taxon>
        <taxon>Tracheophyta</taxon>
        <taxon>Spermatophyta</taxon>
        <taxon>Magnoliopsida</taxon>
        <taxon>eudicotyledons</taxon>
        <taxon>Gunneridae</taxon>
        <taxon>Pentapetalae</taxon>
        <taxon>rosids</taxon>
        <taxon>malvids</taxon>
        <taxon>Brassicales</taxon>
        <taxon>Brassicaceae</taxon>
        <taxon>Camelineae</taxon>
        <taxon>Arabidopsis</taxon>
    </lineage>
</organism>
<dbReference type="EMBL" id="Y08501">
    <property type="protein sequence ID" value="CAA69740.1"/>
    <property type="molecule type" value="Genomic_DNA"/>
</dbReference>
<dbReference type="EMBL" id="BK010421">
    <property type="protein sequence ID" value="DAB41511.2"/>
    <property type="molecule type" value="Genomic_DNA"/>
</dbReference>
<dbReference type="EMBL" id="AC007729">
    <property type="protein sequence ID" value="AAM15498.1"/>
    <property type="status" value="ALT_SEQ"/>
    <property type="molecule type" value="Genomic_DNA"/>
</dbReference>
<dbReference type="EMBL" id="X82565">
    <property type="protein sequence ID" value="CAA57911.1"/>
    <property type="molecule type" value="Genomic_DNA"/>
</dbReference>
<dbReference type="PIR" id="S49606">
    <property type="entry name" value="S49606"/>
</dbReference>
<dbReference type="RefSeq" id="NP_085516.1">
    <property type="nucleotide sequence ID" value="NC_001284.2"/>
</dbReference>
<dbReference type="PDB" id="6XYW">
    <property type="method" value="EM"/>
    <property type="resolution" value="3.86 A"/>
    <property type="chains" value="Aa=1-349"/>
</dbReference>
<dbReference type="PDBsum" id="6XYW"/>
<dbReference type="EMDB" id="EMD-10654"/>
<dbReference type="FunCoup" id="P93311">
    <property type="interactions" value="64"/>
</dbReference>
<dbReference type="IntAct" id="P93311">
    <property type="interactions" value="1"/>
</dbReference>
<dbReference type="STRING" id="3702.A0A2P2CLG6"/>
<dbReference type="PaxDb" id="3702-ATMG00560.1"/>
<dbReference type="Araport" id="ATMG00560"/>
<dbReference type="TAIR" id="ATMG00560">
    <property type="gene designation" value="RPL2"/>
</dbReference>
<dbReference type="eggNOG" id="KOG0438">
    <property type="taxonomic scope" value="Eukaryota"/>
</dbReference>
<dbReference type="HOGENOM" id="CLU_059818_0_0_1"/>
<dbReference type="InParanoid" id="P93311"/>
<dbReference type="PRO" id="PR:P93311"/>
<dbReference type="Proteomes" id="UP000006548">
    <property type="component" value="Mitochondrion MT"/>
</dbReference>
<dbReference type="ExpressionAtlas" id="P93311">
    <property type="expression patterns" value="baseline and differential"/>
</dbReference>
<dbReference type="GO" id="GO:0005762">
    <property type="term" value="C:mitochondrial large ribosomal subunit"/>
    <property type="evidence" value="ECO:0000304"/>
    <property type="project" value="TAIR"/>
</dbReference>
<dbReference type="GO" id="GO:0005739">
    <property type="term" value="C:mitochondrion"/>
    <property type="evidence" value="ECO:0000304"/>
    <property type="project" value="TAIR"/>
</dbReference>
<dbReference type="GO" id="GO:0003729">
    <property type="term" value="F:mRNA binding"/>
    <property type="evidence" value="ECO:0007005"/>
    <property type="project" value="TAIR"/>
</dbReference>
<dbReference type="GO" id="GO:0003735">
    <property type="term" value="F:structural constituent of ribosome"/>
    <property type="evidence" value="ECO:0007669"/>
    <property type="project" value="InterPro"/>
</dbReference>
<dbReference type="GO" id="GO:0006412">
    <property type="term" value="P:translation"/>
    <property type="evidence" value="ECO:0007669"/>
    <property type="project" value="InterPro"/>
</dbReference>
<dbReference type="FunFam" id="2.40.50.140:FF:000254">
    <property type="entry name" value="Ribosomal protein L2 mitochondrion"/>
    <property type="match status" value="1"/>
</dbReference>
<dbReference type="Gene3D" id="2.40.50.140">
    <property type="entry name" value="Nucleic acid-binding proteins"/>
    <property type="match status" value="1"/>
</dbReference>
<dbReference type="InterPro" id="IPR012340">
    <property type="entry name" value="NA-bd_OB-fold"/>
</dbReference>
<dbReference type="InterPro" id="IPR002171">
    <property type="entry name" value="Ribosomal_uL2"/>
</dbReference>
<dbReference type="InterPro" id="IPR022666">
    <property type="entry name" value="Ribosomal_uL2_RNA-bd_dom"/>
</dbReference>
<dbReference type="PANTHER" id="PTHR13691:SF44">
    <property type="entry name" value="LARGE RIBOSOMAL SUBUNIT PROTEIN UL2MZ-RELATED"/>
    <property type="match status" value="1"/>
</dbReference>
<dbReference type="PANTHER" id="PTHR13691">
    <property type="entry name" value="RIBOSOMAL PROTEIN L2"/>
    <property type="match status" value="1"/>
</dbReference>
<dbReference type="Pfam" id="PF00181">
    <property type="entry name" value="Ribosomal_L2"/>
    <property type="match status" value="1"/>
</dbReference>
<dbReference type="SMART" id="SM01383">
    <property type="entry name" value="Ribosomal_L2"/>
    <property type="match status" value="1"/>
</dbReference>
<dbReference type="SUPFAM" id="SSF50249">
    <property type="entry name" value="Nucleic acid-binding proteins"/>
    <property type="match status" value="1"/>
</dbReference>
<geneLocation type="mitochondrion"/>
<gene>
    <name evidence="3" type="primary">RPL2-N</name>
    <name type="ordered locus">AtMg00560</name>
</gene>
<name>RM02N_ARATH</name>
<keyword id="KW-0002">3D-structure</keyword>
<keyword id="KW-0496">Mitochondrion</keyword>
<keyword id="KW-1185">Reference proteome</keyword>
<keyword id="KW-0687">Ribonucleoprotein</keyword>
<keyword id="KW-0689">Ribosomal protein</keyword>
<sequence>MRPGRARALRQFTLSTGKSAGRNSSGRITVFHRGGGSKRLLRRIDLKRSTSSMGIVESIEYDPNRSSQIALVRWIKGGCQKKMNTIEKFAPPRKILEPTTNTISGLFSFSFLPGKVDKRKVACFSPGLMAAYVVVGLPTGMPPLSSSKSAFASKGAGSTKTLVKDVFFSAFSSPKAKRETASLAFASSFGFPRIAVAGAKPAFFAPRMRQKVRGKSTFSLCEVQKGRTHSILWAHRIKGKAGLSWQSFRRQDTLGLVGAAGHKKSKPKTDQGNLPAKPIGERAKQLKALRGLRAKDGACKVDRAPVTYIIASHQLEAGKMVMNCDWSKPSTSSFLQSAQNDHPKPLFTV</sequence>
<evidence type="ECO:0000269" key="1">
    <source>
    </source>
</evidence>
<evidence type="ECO:0000303" key="2">
    <source>
    </source>
</evidence>
<evidence type="ECO:0000305" key="3"/>
<proteinExistence type="evidence at protein level"/>
<comment type="subunit">
    <text evidence="3">Component of the mitochondrial ribosome large subunit.</text>
</comment>
<comment type="subcellular location">
    <subcellularLocation>
        <location evidence="2">Mitochondrion</location>
    </subcellularLocation>
</comment>
<comment type="RNA editing">
    <location>
        <position position="71" evidence="1"/>
    </location>
</comment>
<comment type="miscellaneous">
    <text>A stretch of 270 kb of the mitochondrial genome is duplicated within the centromere of chromosome 2 resulting in the duplication of the gene. The expression of this duplicated gene (At2g07715) is not demonstrated.</text>
</comment>
<comment type="miscellaneous">
    <text evidence="3">In Arabidopsis the N-terminal part of this protein is encoded by a mitochondrially-encoded gene (this entry), while the C-terminal part is encoded nuclearly (At2g44065).</text>
</comment>
<comment type="similarity">
    <text evidence="3">Belongs to the universal ribosomal protein uL2 family.</text>
</comment>
<comment type="sequence caution" evidence="3">
    <conflict type="erroneous gene model prediction">
        <sequence resource="EMBL-CDS" id="AAM15498"/>
    </conflict>
</comment>
<accession>P93311</accession>
<accession>A0A2P2CLG6</accession>
<accession>Q33885</accession>
<accession>Q8S887</accession>
<protein>
    <recommendedName>
        <fullName evidence="2">Large ribosomal subunit protein uL2mz, N-terminal part</fullName>
    </recommendedName>
    <alternativeName>
        <fullName>60S ribosomal protein L2, mitochondrial</fullName>
    </alternativeName>
</protein>